<reference key="1">
    <citation type="journal article" date="2005" name="Nucleic Acids Res.">
        <title>Genomic blueprint of Hahella chejuensis, a marine microbe producing an algicidal agent.</title>
        <authorList>
            <person name="Jeong H."/>
            <person name="Yim J.H."/>
            <person name="Lee C."/>
            <person name="Choi S.-H."/>
            <person name="Park Y.K."/>
            <person name="Yoon S.H."/>
            <person name="Hur C.-G."/>
            <person name="Kang H.-Y."/>
            <person name="Kim D."/>
            <person name="Lee H.H."/>
            <person name="Park K.H."/>
            <person name="Park S.-H."/>
            <person name="Park H.-S."/>
            <person name="Lee H.K."/>
            <person name="Oh T.K."/>
            <person name="Kim J.F."/>
        </authorList>
    </citation>
    <scope>NUCLEOTIDE SEQUENCE [LARGE SCALE GENOMIC DNA]</scope>
    <source>
        <strain>KCTC 2396</strain>
    </source>
</reference>
<comment type="function">
    <text evidence="1">Assembles around the rod to form the L-ring and probably protects the motor/basal body from shearing forces during rotation.</text>
</comment>
<comment type="subunit">
    <text evidence="1">The basal body constitutes a major portion of the flagellar organelle and consists of four rings (L,P,S, and M) mounted on a central rod.</text>
</comment>
<comment type="subcellular location">
    <subcellularLocation>
        <location evidence="1">Periplasm</location>
    </subcellularLocation>
    <subcellularLocation>
        <location evidence="1">Bacterial flagellum basal body</location>
    </subcellularLocation>
</comment>
<comment type="similarity">
    <text evidence="1">Belongs to the FlgI family.</text>
</comment>
<comment type="sequence caution" evidence="2">
    <conflict type="erroneous initiation">
        <sequence resource="EMBL-CDS" id="ABC30795"/>
    </conflict>
</comment>
<gene>
    <name evidence="1" type="primary">flgI1</name>
    <name type="ordered locus">HCH_04082</name>
</gene>
<keyword id="KW-0975">Bacterial flagellum</keyword>
<keyword id="KW-0574">Periplasm</keyword>
<keyword id="KW-1185">Reference proteome</keyword>
<keyword id="KW-0732">Signal</keyword>
<evidence type="ECO:0000255" key="1">
    <source>
        <dbReference type="HAMAP-Rule" id="MF_00416"/>
    </source>
</evidence>
<evidence type="ECO:0000305" key="2"/>
<sequence>MRGISRLYWSLVLICFAFAPIVEASSVRLKELARIEGVRENSLFGYGLVVGLAGTGDTHRSKATLQSIANTLQQFGISLDSDEIASRNVAAVTLTAKLPPFANSGDMIDVNVSSMGDARSLVGGTLLLAPLKAVNGKIYAVAQGQVSVGGFSYDLNGNVVQKNHPTVGVIPSGASVERGLSTDLVGADGHINVILNQPDFTTASRIKNAINKTLGPGKARAVHAGKISVVAPAGEYDLVDYLTRIENSVIEPDRIATVVVNERTGTVVAGGDVTIDNVTISHGNIKVVISTDYQVSQPVFVREPGRGVSTVVVPDTSIDIEESVAEPVRLSSGASIADLVTALRQIKTSTRDVITILQLIKTAGALHAQLVIQ</sequence>
<organism>
    <name type="scientific">Hahella chejuensis (strain KCTC 2396)</name>
    <dbReference type="NCBI Taxonomy" id="349521"/>
    <lineage>
        <taxon>Bacteria</taxon>
        <taxon>Pseudomonadati</taxon>
        <taxon>Pseudomonadota</taxon>
        <taxon>Gammaproteobacteria</taxon>
        <taxon>Oceanospirillales</taxon>
        <taxon>Hahellaceae</taxon>
        <taxon>Hahella</taxon>
    </lineage>
</organism>
<name>FLGI1_HAHCH</name>
<accession>Q2SEX9</accession>
<proteinExistence type="inferred from homology"/>
<dbReference type="EMBL" id="CP000155">
    <property type="protein sequence ID" value="ABC30795.1"/>
    <property type="status" value="ALT_INIT"/>
    <property type="molecule type" value="Genomic_DNA"/>
</dbReference>
<dbReference type="SMR" id="Q2SEX9"/>
<dbReference type="STRING" id="349521.HCH_04082"/>
<dbReference type="KEGG" id="hch:HCH_04082"/>
<dbReference type="eggNOG" id="COG1706">
    <property type="taxonomic scope" value="Bacteria"/>
</dbReference>
<dbReference type="HOGENOM" id="CLU_045235_1_0_6"/>
<dbReference type="OrthoDB" id="9786431at2"/>
<dbReference type="Proteomes" id="UP000000238">
    <property type="component" value="Chromosome"/>
</dbReference>
<dbReference type="GO" id="GO:0009428">
    <property type="term" value="C:bacterial-type flagellum basal body, distal rod, P ring"/>
    <property type="evidence" value="ECO:0007669"/>
    <property type="project" value="InterPro"/>
</dbReference>
<dbReference type="GO" id="GO:0030288">
    <property type="term" value="C:outer membrane-bounded periplasmic space"/>
    <property type="evidence" value="ECO:0007669"/>
    <property type="project" value="InterPro"/>
</dbReference>
<dbReference type="GO" id="GO:0005198">
    <property type="term" value="F:structural molecule activity"/>
    <property type="evidence" value="ECO:0007669"/>
    <property type="project" value="InterPro"/>
</dbReference>
<dbReference type="GO" id="GO:0071973">
    <property type="term" value="P:bacterial-type flagellum-dependent cell motility"/>
    <property type="evidence" value="ECO:0007669"/>
    <property type="project" value="InterPro"/>
</dbReference>
<dbReference type="HAMAP" id="MF_00416">
    <property type="entry name" value="FlgI"/>
    <property type="match status" value="1"/>
</dbReference>
<dbReference type="InterPro" id="IPR001782">
    <property type="entry name" value="Flag_FlgI"/>
</dbReference>
<dbReference type="NCBIfam" id="NF003676">
    <property type="entry name" value="PRK05303.1"/>
    <property type="match status" value="1"/>
</dbReference>
<dbReference type="PANTHER" id="PTHR30381">
    <property type="entry name" value="FLAGELLAR P-RING PERIPLASMIC PROTEIN FLGI"/>
    <property type="match status" value="1"/>
</dbReference>
<dbReference type="PANTHER" id="PTHR30381:SF0">
    <property type="entry name" value="FLAGELLAR P-RING PROTEIN"/>
    <property type="match status" value="1"/>
</dbReference>
<dbReference type="Pfam" id="PF02119">
    <property type="entry name" value="FlgI"/>
    <property type="match status" value="1"/>
</dbReference>
<dbReference type="PRINTS" id="PR01010">
    <property type="entry name" value="FLGPRINGFLGI"/>
</dbReference>
<feature type="signal peptide" evidence="1">
    <location>
        <begin position="1"/>
        <end position="24"/>
    </location>
</feature>
<feature type="chain" id="PRO_0000236302" description="Flagellar P-ring protein 1">
    <location>
        <begin position="25"/>
        <end position="373"/>
    </location>
</feature>
<protein>
    <recommendedName>
        <fullName evidence="1">Flagellar P-ring protein 1</fullName>
    </recommendedName>
    <alternativeName>
        <fullName evidence="1">Basal body P-ring protein 1</fullName>
    </alternativeName>
</protein>